<feature type="chain" id="PRO_1000215725" description="Pyridoxal 5'-phosphate synthase subunit PdxT">
    <location>
        <begin position="1"/>
        <end position="200"/>
    </location>
</feature>
<feature type="active site" description="Nucleophile" evidence="1">
    <location>
        <position position="84"/>
    </location>
</feature>
<feature type="active site" description="Charge relay system" evidence="1">
    <location>
        <position position="181"/>
    </location>
</feature>
<feature type="active site" description="Charge relay system" evidence="1">
    <location>
        <position position="183"/>
    </location>
</feature>
<feature type="binding site" evidence="1">
    <location>
        <begin position="52"/>
        <end position="54"/>
    </location>
    <ligand>
        <name>L-glutamine</name>
        <dbReference type="ChEBI" id="CHEBI:58359"/>
    </ligand>
</feature>
<feature type="binding site" evidence="1">
    <location>
        <position position="116"/>
    </location>
    <ligand>
        <name>L-glutamine</name>
        <dbReference type="ChEBI" id="CHEBI:58359"/>
    </ligand>
</feature>
<feature type="binding site" evidence="1">
    <location>
        <begin position="145"/>
        <end position="146"/>
    </location>
    <ligand>
        <name>L-glutamine</name>
        <dbReference type="ChEBI" id="CHEBI:58359"/>
    </ligand>
</feature>
<sequence length="200" mass="21823">MKIGIIAYQGSFEEHYLQLKRAFDKWSINGEITPVKIPKDLKDIDGVIIPGGESTTIGLVAKRLGILDELKEKITSGLPVMGTCAGAIMLAKEVSDAKVGKTSQPLIGAMNISIIRNYYGRQRESFEAIIDLSKIGKGKANVVFIRAPAITKLWGKTQSLAELNGVTVLAEENNILATTFHPELSDTTSIHEYFLHLVKG</sequence>
<evidence type="ECO:0000255" key="1">
    <source>
        <dbReference type="HAMAP-Rule" id="MF_01615"/>
    </source>
</evidence>
<organism>
    <name type="scientific">Saccharolobus islandicus (strain Y.N.15.51 / Yellowstone #2)</name>
    <name type="common">Sulfolobus islandicus</name>
    <dbReference type="NCBI Taxonomy" id="419942"/>
    <lineage>
        <taxon>Archaea</taxon>
        <taxon>Thermoproteota</taxon>
        <taxon>Thermoprotei</taxon>
        <taxon>Sulfolobales</taxon>
        <taxon>Sulfolobaceae</taxon>
        <taxon>Saccharolobus</taxon>
    </lineage>
</organism>
<dbReference type="EC" id="4.3.3.6" evidence="1"/>
<dbReference type="EC" id="3.5.1.2" evidence="1"/>
<dbReference type="EMBL" id="CP001404">
    <property type="protein sequence ID" value="ACP48369.1"/>
    <property type="molecule type" value="Genomic_DNA"/>
</dbReference>
<dbReference type="RefSeq" id="WP_012717395.1">
    <property type="nucleotide sequence ID" value="NC_012623.1"/>
</dbReference>
<dbReference type="SMR" id="C3NGV9"/>
<dbReference type="GeneID" id="7810933"/>
<dbReference type="KEGG" id="sin:YN1551_1274"/>
<dbReference type="HOGENOM" id="CLU_069674_2_0_2"/>
<dbReference type="UniPathway" id="UPA00245"/>
<dbReference type="Proteomes" id="UP000006818">
    <property type="component" value="Chromosome"/>
</dbReference>
<dbReference type="GO" id="GO:0005829">
    <property type="term" value="C:cytosol"/>
    <property type="evidence" value="ECO:0007669"/>
    <property type="project" value="TreeGrafter"/>
</dbReference>
<dbReference type="GO" id="GO:1903600">
    <property type="term" value="C:glutaminase complex"/>
    <property type="evidence" value="ECO:0007669"/>
    <property type="project" value="TreeGrafter"/>
</dbReference>
<dbReference type="GO" id="GO:0004359">
    <property type="term" value="F:glutaminase activity"/>
    <property type="evidence" value="ECO:0007669"/>
    <property type="project" value="UniProtKB-UniRule"/>
</dbReference>
<dbReference type="GO" id="GO:0036381">
    <property type="term" value="F:pyridoxal 5'-phosphate synthase (glutamine hydrolysing) activity"/>
    <property type="evidence" value="ECO:0007669"/>
    <property type="project" value="UniProtKB-UniRule"/>
</dbReference>
<dbReference type="GO" id="GO:0006543">
    <property type="term" value="P:glutamine catabolic process"/>
    <property type="evidence" value="ECO:0007669"/>
    <property type="project" value="UniProtKB-UniRule"/>
</dbReference>
<dbReference type="GO" id="GO:0042823">
    <property type="term" value="P:pyridoxal phosphate biosynthetic process"/>
    <property type="evidence" value="ECO:0007669"/>
    <property type="project" value="UniProtKB-UniRule"/>
</dbReference>
<dbReference type="GO" id="GO:0008614">
    <property type="term" value="P:pyridoxine metabolic process"/>
    <property type="evidence" value="ECO:0007669"/>
    <property type="project" value="TreeGrafter"/>
</dbReference>
<dbReference type="CDD" id="cd01749">
    <property type="entry name" value="GATase1_PB"/>
    <property type="match status" value="1"/>
</dbReference>
<dbReference type="FunFam" id="3.40.50.880:FF:000041">
    <property type="entry name" value="Glutamine amidotransferase subunit pdxT, putative"/>
    <property type="match status" value="1"/>
</dbReference>
<dbReference type="Gene3D" id="3.40.50.880">
    <property type="match status" value="1"/>
</dbReference>
<dbReference type="HAMAP" id="MF_01615">
    <property type="entry name" value="PdxT"/>
    <property type="match status" value="1"/>
</dbReference>
<dbReference type="InterPro" id="IPR029062">
    <property type="entry name" value="Class_I_gatase-like"/>
</dbReference>
<dbReference type="InterPro" id="IPR002161">
    <property type="entry name" value="PdxT/SNO"/>
</dbReference>
<dbReference type="InterPro" id="IPR021196">
    <property type="entry name" value="PdxT/SNO_CS"/>
</dbReference>
<dbReference type="NCBIfam" id="TIGR03800">
    <property type="entry name" value="PLP_synth_Pdx2"/>
    <property type="match status" value="1"/>
</dbReference>
<dbReference type="PANTHER" id="PTHR31559">
    <property type="entry name" value="PYRIDOXAL 5'-PHOSPHATE SYNTHASE SUBUNIT SNO"/>
    <property type="match status" value="1"/>
</dbReference>
<dbReference type="PANTHER" id="PTHR31559:SF0">
    <property type="entry name" value="PYRIDOXAL 5'-PHOSPHATE SYNTHASE SUBUNIT SNO1-RELATED"/>
    <property type="match status" value="1"/>
</dbReference>
<dbReference type="Pfam" id="PF01174">
    <property type="entry name" value="SNO"/>
    <property type="match status" value="1"/>
</dbReference>
<dbReference type="PIRSF" id="PIRSF005639">
    <property type="entry name" value="Glut_amidoT_SNO"/>
    <property type="match status" value="1"/>
</dbReference>
<dbReference type="SUPFAM" id="SSF52317">
    <property type="entry name" value="Class I glutamine amidotransferase-like"/>
    <property type="match status" value="1"/>
</dbReference>
<dbReference type="PROSITE" id="PS01236">
    <property type="entry name" value="PDXT_SNO_1"/>
    <property type="match status" value="1"/>
</dbReference>
<dbReference type="PROSITE" id="PS51130">
    <property type="entry name" value="PDXT_SNO_2"/>
    <property type="match status" value="1"/>
</dbReference>
<protein>
    <recommendedName>
        <fullName evidence="1">Pyridoxal 5'-phosphate synthase subunit PdxT</fullName>
        <ecNumber evidence="1">4.3.3.6</ecNumber>
    </recommendedName>
    <alternativeName>
        <fullName evidence="1">Pdx2</fullName>
    </alternativeName>
    <alternativeName>
        <fullName evidence="1">Pyridoxal 5'-phosphate synthase glutaminase subunit</fullName>
        <ecNumber evidence="1">3.5.1.2</ecNumber>
    </alternativeName>
</protein>
<comment type="function">
    <text evidence="1">Catalyzes the hydrolysis of glutamine to glutamate and ammonia as part of the biosynthesis of pyridoxal 5'-phosphate. The resulting ammonia molecule is channeled to the active site of PdxS.</text>
</comment>
<comment type="catalytic activity">
    <reaction evidence="1">
        <text>aldehydo-D-ribose 5-phosphate + D-glyceraldehyde 3-phosphate + L-glutamine = pyridoxal 5'-phosphate + L-glutamate + phosphate + 3 H2O + H(+)</text>
        <dbReference type="Rhea" id="RHEA:31507"/>
        <dbReference type="ChEBI" id="CHEBI:15377"/>
        <dbReference type="ChEBI" id="CHEBI:15378"/>
        <dbReference type="ChEBI" id="CHEBI:29985"/>
        <dbReference type="ChEBI" id="CHEBI:43474"/>
        <dbReference type="ChEBI" id="CHEBI:58273"/>
        <dbReference type="ChEBI" id="CHEBI:58359"/>
        <dbReference type="ChEBI" id="CHEBI:59776"/>
        <dbReference type="ChEBI" id="CHEBI:597326"/>
        <dbReference type="EC" id="4.3.3.6"/>
    </reaction>
</comment>
<comment type="catalytic activity">
    <reaction evidence="1">
        <text>L-glutamine + H2O = L-glutamate + NH4(+)</text>
        <dbReference type="Rhea" id="RHEA:15889"/>
        <dbReference type="ChEBI" id="CHEBI:15377"/>
        <dbReference type="ChEBI" id="CHEBI:28938"/>
        <dbReference type="ChEBI" id="CHEBI:29985"/>
        <dbReference type="ChEBI" id="CHEBI:58359"/>
        <dbReference type="EC" id="3.5.1.2"/>
    </reaction>
</comment>
<comment type="pathway">
    <text evidence="1">Cofactor biosynthesis; pyridoxal 5'-phosphate biosynthesis.</text>
</comment>
<comment type="subunit">
    <text evidence="1">In the presence of PdxS, forms a dodecamer of heterodimers. Only shows activity in the heterodimer.</text>
</comment>
<comment type="similarity">
    <text evidence="1">Belongs to the glutaminase PdxT/SNO family.</text>
</comment>
<keyword id="KW-0315">Glutamine amidotransferase</keyword>
<keyword id="KW-0378">Hydrolase</keyword>
<keyword id="KW-0456">Lyase</keyword>
<keyword id="KW-0663">Pyridoxal phosphate</keyword>
<gene>
    <name evidence="1" type="primary">pdxT</name>
    <name type="ordered locus">YN1551_1274</name>
</gene>
<accession>C3NGV9</accession>
<name>PDXT_SACI1</name>
<proteinExistence type="inferred from homology"/>
<reference key="1">
    <citation type="journal article" date="2009" name="Proc. Natl. Acad. Sci. U.S.A.">
        <title>Biogeography of the Sulfolobus islandicus pan-genome.</title>
        <authorList>
            <person name="Reno M.L."/>
            <person name="Held N.L."/>
            <person name="Fields C.J."/>
            <person name="Burke P.V."/>
            <person name="Whitaker R.J."/>
        </authorList>
    </citation>
    <scope>NUCLEOTIDE SEQUENCE [LARGE SCALE GENOMIC DNA]</scope>
    <source>
        <strain>Y.N.15.51 / Yellowstone #2</strain>
    </source>
</reference>